<accession>Q2UB17</accession>
<organism>
    <name type="scientific">Aspergillus oryzae (strain ATCC 42149 / RIB 40)</name>
    <name type="common">Yellow koji mold</name>
    <dbReference type="NCBI Taxonomy" id="510516"/>
    <lineage>
        <taxon>Eukaryota</taxon>
        <taxon>Fungi</taxon>
        <taxon>Dikarya</taxon>
        <taxon>Ascomycota</taxon>
        <taxon>Pezizomycotina</taxon>
        <taxon>Eurotiomycetes</taxon>
        <taxon>Eurotiomycetidae</taxon>
        <taxon>Eurotiales</taxon>
        <taxon>Aspergillaceae</taxon>
        <taxon>Aspergillus</taxon>
        <taxon>Aspergillus subgen. Circumdati</taxon>
    </lineage>
</organism>
<protein>
    <recommendedName>
        <fullName>Pre-rRNA-processing protein esf2</fullName>
    </recommendedName>
    <alternativeName>
        <fullName>18S rRNA factor 2</fullName>
    </alternativeName>
</protein>
<keyword id="KW-0539">Nucleus</keyword>
<keyword id="KW-1185">Reference proteome</keyword>
<keyword id="KW-0690">Ribosome biogenesis</keyword>
<keyword id="KW-0694">RNA-binding</keyword>
<keyword id="KW-0698">rRNA processing</keyword>
<dbReference type="EMBL" id="BA000052">
    <property type="protein sequence ID" value="BAE61248.1"/>
    <property type="molecule type" value="Genomic_DNA"/>
</dbReference>
<dbReference type="RefSeq" id="XP_001822381.1">
    <property type="nucleotide sequence ID" value="XM_001822329.1"/>
</dbReference>
<dbReference type="STRING" id="510516.Q2UB17"/>
<dbReference type="EnsemblFungi" id="BAE61248">
    <property type="protein sequence ID" value="BAE61248"/>
    <property type="gene ID" value="AO090102000149"/>
</dbReference>
<dbReference type="GeneID" id="5994426"/>
<dbReference type="KEGG" id="aor:AO090102000149"/>
<dbReference type="VEuPathDB" id="FungiDB:AO090102000149"/>
<dbReference type="HOGENOM" id="CLU_054086_0_1_1"/>
<dbReference type="OMA" id="TRKHNDF"/>
<dbReference type="OrthoDB" id="128284at5052"/>
<dbReference type="Proteomes" id="UP000006564">
    <property type="component" value="Chromosome 4"/>
</dbReference>
<dbReference type="GO" id="GO:0005730">
    <property type="term" value="C:nucleolus"/>
    <property type="evidence" value="ECO:0007669"/>
    <property type="project" value="UniProtKB-SubCell"/>
</dbReference>
<dbReference type="GO" id="GO:0003723">
    <property type="term" value="F:RNA binding"/>
    <property type="evidence" value="ECO:0007669"/>
    <property type="project" value="UniProtKB-KW"/>
</dbReference>
<dbReference type="GO" id="GO:0000480">
    <property type="term" value="P:endonucleolytic cleavage in 5'-ETS of tricistronic rRNA transcript (SSU-rRNA, 5.8S rRNA, LSU-rRNA)"/>
    <property type="evidence" value="ECO:0007669"/>
    <property type="project" value="TreeGrafter"/>
</dbReference>
<dbReference type="GO" id="GO:0000447">
    <property type="term" value="P:endonucleolytic cleavage in ITS1 to separate SSU-rRNA from 5.8S rRNA and LSU-rRNA from tricistronic rRNA transcript (SSU-rRNA, 5.8S rRNA, LSU-rRNA)"/>
    <property type="evidence" value="ECO:0007669"/>
    <property type="project" value="TreeGrafter"/>
</dbReference>
<dbReference type="GO" id="GO:0000472">
    <property type="term" value="P:endonucleolytic cleavage to generate mature 5'-end of SSU-rRNA from (SSU-rRNA, 5.8S rRNA, LSU-rRNA)"/>
    <property type="evidence" value="ECO:0007669"/>
    <property type="project" value="TreeGrafter"/>
</dbReference>
<dbReference type="GO" id="GO:0034462">
    <property type="term" value="P:small-subunit processome assembly"/>
    <property type="evidence" value="ECO:0007669"/>
    <property type="project" value="TreeGrafter"/>
</dbReference>
<dbReference type="CDD" id="cd12263">
    <property type="entry name" value="RRM_ABT1_like"/>
    <property type="match status" value="1"/>
</dbReference>
<dbReference type="Gene3D" id="3.30.70.330">
    <property type="match status" value="1"/>
</dbReference>
<dbReference type="InterPro" id="IPR039119">
    <property type="entry name" value="ABT1/Esf2"/>
</dbReference>
<dbReference type="InterPro" id="IPR034353">
    <property type="entry name" value="ABT1/ESF2_RRM"/>
</dbReference>
<dbReference type="InterPro" id="IPR012677">
    <property type="entry name" value="Nucleotide-bd_a/b_plait_sf"/>
</dbReference>
<dbReference type="InterPro" id="IPR035979">
    <property type="entry name" value="RBD_domain_sf"/>
</dbReference>
<dbReference type="PANTHER" id="PTHR12311">
    <property type="entry name" value="ACTIVATOR OF BASAL TRANSCRIPTION 1"/>
    <property type="match status" value="1"/>
</dbReference>
<dbReference type="PANTHER" id="PTHR12311:SF7">
    <property type="entry name" value="ACTIVATOR OF BASAL TRANSCRIPTION 1"/>
    <property type="match status" value="1"/>
</dbReference>
<dbReference type="SUPFAM" id="SSF54928">
    <property type="entry name" value="RNA-binding domain, RBD"/>
    <property type="match status" value="1"/>
</dbReference>
<proteinExistence type="inferred from homology"/>
<feature type="chain" id="PRO_0000285365" description="Pre-rRNA-processing protein esf2">
    <location>
        <begin position="1"/>
        <end position="335"/>
    </location>
</feature>
<feature type="domain" description="RRM">
    <location>
        <begin position="127"/>
        <end position="217"/>
    </location>
</feature>
<feature type="region of interest" description="Disordered" evidence="2">
    <location>
        <begin position="1"/>
        <end position="127"/>
    </location>
</feature>
<feature type="region of interest" description="Disordered" evidence="2">
    <location>
        <begin position="272"/>
        <end position="321"/>
    </location>
</feature>
<feature type="compositionally biased region" description="Basic and acidic residues" evidence="2">
    <location>
        <begin position="21"/>
        <end position="34"/>
    </location>
</feature>
<feature type="compositionally biased region" description="Basic residues" evidence="2">
    <location>
        <begin position="66"/>
        <end position="76"/>
    </location>
</feature>
<feature type="compositionally biased region" description="Acidic residues" evidence="2">
    <location>
        <begin position="82"/>
        <end position="92"/>
    </location>
</feature>
<feature type="compositionally biased region" description="Basic and acidic residues" evidence="2">
    <location>
        <begin position="105"/>
        <end position="119"/>
    </location>
</feature>
<feature type="compositionally biased region" description="Basic and acidic residues" evidence="2">
    <location>
        <begin position="296"/>
        <end position="321"/>
    </location>
</feature>
<gene>
    <name type="primary">esf2</name>
    <name type="ORF">AO090102000149</name>
</gene>
<evidence type="ECO:0000250" key="1"/>
<evidence type="ECO:0000256" key="2">
    <source>
        <dbReference type="SAM" id="MobiDB-lite"/>
    </source>
</evidence>
<evidence type="ECO:0000305" key="3"/>
<comment type="function">
    <text evidence="1">Involved in the small subunit (SSU) processome assembly and function, and in the 18S rRNA synthesis. Required for the early cleavages at sites A0, A1 and A2 (By similarity).</text>
</comment>
<comment type="subcellular location">
    <subcellularLocation>
        <location evidence="1">Nucleus</location>
        <location evidence="1">Nucleolus</location>
    </subcellularLocation>
</comment>
<comment type="similarity">
    <text evidence="3">Belongs to the ESF2/ABP1 family.</text>
</comment>
<sequence>MTTRKRNEFLDLAPSDDEDNDRGYDSEAAEESKARISKRRRTQTQDDESDQSDNDSVASDEDLKLSKSKGKAKKPQQRSEEDVISDNDDEQQETSGTQYLDVTEQETKSSKRKPLDKGKPPKKNKTGVVYLSSLPPYLKPFALKSMLEARSFGPITKVFLSPSVRPASAPRRRSNKRKTYTDGWVEFASKKTAKLCAETLNASIVGGRKGGWYHDDVWNMKYLKGFKWGDLMEQVQRERQEREAKQRIEDARARKEDKVFLQGVETGKVLDGMQRKNEEKKKRKMESGDAGGQQTEELKVRRTFKQNEVKKGRHTIKDGEAALEDDTKRVLGKIF</sequence>
<reference key="1">
    <citation type="journal article" date="2005" name="Nature">
        <title>Genome sequencing and analysis of Aspergillus oryzae.</title>
        <authorList>
            <person name="Machida M."/>
            <person name="Asai K."/>
            <person name="Sano M."/>
            <person name="Tanaka T."/>
            <person name="Kumagai T."/>
            <person name="Terai G."/>
            <person name="Kusumoto K."/>
            <person name="Arima T."/>
            <person name="Akita O."/>
            <person name="Kashiwagi Y."/>
            <person name="Abe K."/>
            <person name="Gomi K."/>
            <person name="Horiuchi H."/>
            <person name="Kitamoto K."/>
            <person name="Kobayashi T."/>
            <person name="Takeuchi M."/>
            <person name="Denning D.W."/>
            <person name="Galagan J.E."/>
            <person name="Nierman W.C."/>
            <person name="Yu J."/>
            <person name="Archer D.B."/>
            <person name="Bennett J.W."/>
            <person name="Bhatnagar D."/>
            <person name="Cleveland T.E."/>
            <person name="Fedorova N.D."/>
            <person name="Gotoh O."/>
            <person name="Horikawa H."/>
            <person name="Hosoyama A."/>
            <person name="Ichinomiya M."/>
            <person name="Igarashi R."/>
            <person name="Iwashita K."/>
            <person name="Juvvadi P.R."/>
            <person name="Kato M."/>
            <person name="Kato Y."/>
            <person name="Kin T."/>
            <person name="Kokubun A."/>
            <person name="Maeda H."/>
            <person name="Maeyama N."/>
            <person name="Maruyama J."/>
            <person name="Nagasaki H."/>
            <person name="Nakajima T."/>
            <person name="Oda K."/>
            <person name="Okada K."/>
            <person name="Paulsen I."/>
            <person name="Sakamoto K."/>
            <person name="Sawano T."/>
            <person name="Takahashi M."/>
            <person name="Takase K."/>
            <person name="Terabayashi Y."/>
            <person name="Wortman J.R."/>
            <person name="Yamada O."/>
            <person name="Yamagata Y."/>
            <person name="Anazawa H."/>
            <person name="Hata Y."/>
            <person name="Koide Y."/>
            <person name="Komori T."/>
            <person name="Koyama Y."/>
            <person name="Minetoki T."/>
            <person name="Suharnan S."/>
            <person name="Tanaka A."/>
            <person name="Isono K."/>
            <person name="Kuhara S."/>
            <person name="Ogasawara N."/>
            <person name="Kikuchi H."/>
        </authorList>
    </citation>
    <scope>NUCLEOTIDE SEQUENCE [LARGE SCALE GENOMIC DNA]</scope>
    <source>
        <strain>ATCC 42149 / RIB 40</strain>
    </source>
</reference>
<name>ESF2_ASPOR</name>